<gene>
    <name type="primary">baeB</name>
    <name type="ordered locus">RBAM_016900</name>
</gene>
<organism>
    <name type="scientific">Bacillus velezensis (strain DSM 23117 / BGSC 10A6 / LMG 26770 / FZB42)</name>
    <name type="common">Bacillus amyloliquefaciens subsp. plantarum</name>
    <dbReference type="NCBI Taxonomy" id="326423"/>
    <lineage>
        <taxon>Bacteria</taxon>
        <taxon>Bacillati</taxon>
        <taxon>Bacillota</taxon>
        <taxon>Bacilli</taxon>
        <taxon>Bacillales</taxon>
        <taxon>Bacillaceae</taxon>
        <taxon>Bacillus</taxon>
        <taxon>Bacillus amyloliquefaciens group</taxon>
    </lineage>
</organism>
<feature type="chain" id="PRO_0000388005" description="Probable polyketide biosynthesis zinc-dependent hydrolase BaeB">
    <location>
        <begin position="1"/>
        <end position="225"/>
    </location>
</feature>
<feature type="binding site" evidence="1">
    <location>
        <position position="62"/>
    </location>
    <ligand>
        <name>Zn(2+)</name>
        <dbReference type="ChEBI" id="CHEBI:29105"/>
        <label>1</label>
    </ligand>
</feature>
<feature type="binding site" evidence="1">
    <location>
        <position position="64"/>
    </location>
    <ligand>
        <name>Zn(2+)</name>
        <dbReference type="ChEBI" id="CHEBI:29105"/>
        <label>1</label>
    </ligand>
</feature>
<feature type="binding site" evidence="1">
    <location>
        <position position="66"/>
    </location>
    <ligand>
        <name>Zn(2+)</name>
        <dbReference type="ChEBI" id="CHEBI:29105"/>
        <label>2</label>
    </ligand>
</feature>
<feature type="binding site" evidence="1">
    <location>
        <position position="67"/>
    </location>
    <ligand>
        <name>Zn(2+)</name>
        <dbReference type="ChEBI" id="CHEBI:29105"/>
        <label>2</label>
    </ligand>
</feature>
<feature type="binding site" evidence="1">
    <location>
        <position position="123"/>
    </location>
    <ligand>
        <name>Zn(2+)</name>
        <dbReference type="ChEBI" id="CHEBI:29105"/>
        <label>1</label>
    </ligand>
</feature>
<feature type="binding site" evidence="1">
    <location>
        <position position="140"/>
    </location>
    <ligand>
        <name>Zn(2+)</name>
        <dbReference type="ChEBI" id="CHEBI:29105"/>
        <label>1</label>
    </ligand>
</feature>
<feature type="binding site" evidence="1">
    <location>
        <position position="140"/>
    </location>
    <ligand>
        <name>Zn(2+)</name>
        <dbReference type="ChEBI" id="CHEBI:29105"/>
        <label>2</label>
    </ligand>
</feature>
<feature type="binding site" evidence="1">
    <location>
        <position position="181"/>
    </location>
    <ligand>
        <name>Zn(2+)</name>
        <dbReference type="ChEBI" id="CHEBI:29105"/>
        <label>2</label>
    </ligand>
</feature>
<dbReference type="EC" id="3.-.-.-"/>
<dbReference type="EMBL" id="CP000560">
    <property type="protein sequence ID" value="ABS74053.1"/>
    <property type="molecule type" value="Genomic_DNA"/>
</dbReference>
<dbReference type="RefSeq" id="WP_012117588.1">
    <property type="nucleotide sequence ID" value="NC_009725.2"/>
</dbReference>
<dbReference type="SMR" id="A7Z4X7"/>
<dbReference type="GeneID" id="93080824"/>
<dbReference type="KEGG" id="bay:RBAM_016900"/>
<dbReference type="HOGENOM" id="CLU_030571_5_3_9"/>
<dbReference type="UniPathway" id="UPA01003"/>
<dbReference type="Proteomes" id="UP000001120">
    <property type="component" value="Chromosome"/>
</dbReference>
<dbReference type="GO" id="GO:0005737">
    <property type="term" value="C:cytoplasm"/>
    <property type="evidence" value="ECO:0007669"/>
    <property type="project" value="UniProtKB-SubCell"/>
</dbReference>
<dbReference type="GO" id="GO:0016787">
    <property type="term" value="F:hydrolase activity"/>
    <property type="evidence" value="ECO:0007669"/>
    <property type="project" value="UniProtKB-KW"/>
</dbReference>
<dbReference type="GO" id="GO:0046872">
    <property type="term" value="F:metal ion binding"/>
    <property type="evidence" value="ECO:0007669"/>
    <property type="project" value="UniProtKB-KW"/>
</dbReference>
<dbReference type="GO" id="GO:0017000">
    <property type="term" value="P:antibiotic biosynthetic process"/>
    <property type="evidence" value="ECO:0007669"/>
    <property type="project" value="UniProtKB-KW"/>
</dbReference>
<dbReference type="CDD" id="cd16275">
    <property type="entry name" value="BaeB-like_MBL-fold"/>
    <property type="match status" value="1"/>
</dbReference>
<dbReference type="Gene3D" id="3.60.15.10">
    <property type="entry name" value="Ribonuclease Z/Hydroxyacylglutathione hydrolase-like"/>
    <property type="match status" value="1"/>
</dbReference>
<dbReference type="InterPro" id="IPR051453">
    <property type="entry name" value="MBL_Glyoxalase_II"/>
</dbReference>
<dbReference type="InterPro" id="IPR001279">
    <property type="entry name" value="Metallo-B-lactamas"/>
</dbReference>
<dbReference type="InterPro" id="IPR036866">
    <property type="entry name" value="RibonucZ/Hydroxyglut_hydro"/>
</dbReference>
<dbReference type="PANTHER" id="PTHR46233">
    <property type="entry name" value="HYDROXYACYLGLUTATHIONE HYDROLASE GLOC"/>
    <property type="match status" value="1"/>
</dbReference>
<dbReference type="PANTHER" id="PTHR46233:SF3">
    <property type="entry name" value="HYDROXYACYLGLUTATHIONE HYDROLASE GLOC"/>
    <property type="match status" value="1"/>
</dbReference>
<dbReference type="Pfam" id="PF00753">
    <property type="entry name" value="Lactamase_B"/>
    <property type="match status" value="1"/>
</dbReference>
<dbReference type="SMART" id="SM00849">
    <property type="entry name" value="Lactamase_B"/>
    <property type="match status" value="1"/>
</dbReference>
<dbReference type="SUPFAM" id="SSF56281">
    <property type="entry name" value="Metallo-hydrolase/oxidoreductase"/>
    <property type="match status" value="1"/>
</dbReference>
<proteinExistence type="evidence at protein level"/>
<accession>A7Z4X7</accession>
<keyword id="KW-0045">Antibiotic biosynthesis</keyword>
<keyword id="KW-0963">Cytoplasm</keyword>
<keyword id="KW-0378">Hydrolase</keyword>
<keyword id="KW-0479">Metal-binding</keyword>
<keyword id="KW-0862">Zinc</keyword>
<sequence length="225" mass="25875">MDHTYEVHQIKTYHQMWSNYCYIIADRSKKSAIAVDPSWEIDKITDKLHELDVDLSAILLTHSHYDHVNLAEPLQQIYHSDIYMSSAEIDFYQFRCRNLIALEDGQTFAAGGFIIRSILTPGHTAGGMCYLLSDHLFTGDTVFTEGCGICGDRGSSAEDMFHSIQRIKASIPPHVRVYPGHSFGEKPGQKMESLLKNNIYFQIEKKEHFVNFRNRKNQKGLFHFK</sequence>
<evidence type="ECO:0000250" key="1"/>
<evidence type="ECO:0000269" key="2">
    <source>
    </source>
</evidence>
<evidence type="ECO:0000305" key="3"/>
<reference key="1">
    <citation type="journal article" date="2007" name="Nat. Biotechnol.">
        <title>Comparative analysis of the complete genome sequence of the plant growth-promoting bacterium Bacillus amyloliquefaciens FZB42.</title>
        <authorList>
            <person name="Chen X.H."/>
            <person name="Koumoutsi A."/>
            <person name="Scholz R."/>
            <person name="Eisenreich A."/>
            <person name="Schneider K."/>
            <person name="Heinemeyer I."/>
            <person name="Morgenstern B."/>
            <person name="Voss B."/>
            <person name="Hess W.R."/>
            <person name="Reva O."/>
            <person name="Junge H."/>
            <person name="Voigt B."/>
            <person name="Jungblut P.R."/>
            <person name="Vater J."/>
            <person name="Suessmuth R."/>
            <person name="Liesegang H."/>
            <person name="Strittmatter A."/>
            <person name="Gottschalk G."/>
            <person name="Borriss R."/>
        </authorList>
    </citation>
    <scope>NUCLEOTIDE SEQUENCE [LARGE SCALE GENOMIC DNA]</scope>
    <source>
        <strain>DSM 23117 / BGSC 10A6 / LMG 26770 / FZB42</strain>
    </source>
</reference>
<reference key="2">
    <citation type="journal article" date="2006" name="J. Bacteriol.">
        <title>Structural and functional characterization of three polyketide synthase gene clusters in Bacillus amyloliquefaciens FZB 42.</title>
        <authorList>
            <person name="Chen X.-H."/>
            <person name="Vater J."/>
            <person name="Piel J."/>
            <person name="Franke P."/>
            <person name="Scholz R."/>
            <person name="Schneider K."/>
            <person name="Koumoutsi A."/>
            <person name="Hitzeroth G."/>
            <person name="Grammel N."/>
            <person name="Strittmatter A.W."/>
            <person name="Gottschalk G."/>
            <person name="Suessmuth R.D."/>
            <person name="Borriss R."/>
        </authorList>
    </citation>
    <scope>PATHWAY</scope>
    <scope>FUNCTION IN BACILLAENE BIOSYNTHESIS</scope>
</reference>
<comment type="function">
    <text evidence="2">Probably involved in some intermediate steps for the synthesis of the antibiotic polyketide bacillaene which is involved in secondary metabolism.</text>
</comment>
<comment type="cofactor">
    <cofactor evidence="1">
        <name>Zn(2+)</name>
        <dbReference type="ChEBI" id="CHEBI:29105"/>
    </cofactor>
    <text evidence="1">Binds 2 Zn(2+) ions per subunit.</text>
</comment>
<comment type="pathway">
    <text evidence="2">Antibiotic biosynthesis; bacillaene biosynthesis.</text>
</comment>
<comment type="subcellular location">
    <subcellularLocation>
        <location evidence="1">Cytoplasm</location>
    </subcellularLocation>
</comment>
<comment type="similarity">
    <text evidence="3">Belongs to the metallo-beta-lactamase superfamily.</text>
</comment>
<name>BAEB_BACVZ</name>
<protein>
    <recommendedName>
        <fullName>Probable polyketide biosynthesis zinc-dependent hydrolase BaeB</fullName>
        <ecNumber>3.-.-.-</ecNumber>
    </recommendedName>
</protein>